<name>PA1_SALTI</name>
<dbReference type="EC" id="3.1.1.32"/>
<dbReference type="EC" id="3.1.1.4"/>
<dbReference type="EMBL" id="AL513382">
    <property type="protein sequence ID" value="CAD07935.1"/>
    <property type="molecule type" value="Genomic_DNA"/>
</dbReference>
<dbReference type="EMBL" id="AE014613">
    <property type="protein sequence ID" value="AAO70868.1"/>
    <property type="molecule type" value="Genomic_DNA"/>
</dbReference>
<dbReference type="RefSeq" id="NP_457794.1">
    <property type="nucleotide sequence ID" value="NC_003198.1"/>
</dbReference>
<dbReference type="RefSeq" id="WP_001201692.1">
    <property type="nucleotide sequence ID" value="NZ_WSUR01000033.1"/>
</dbReference>
<dbReference type="PDB" id="7EZZ">
    <property type="method" value="X-ray"/>
    <property type="resolution" value="2.76 A"/>
    <property type="chains" value="A/B=33-289"/>
</dbReference>
<dbReference type="PDBsum" id="7EZZ"/>
<dbReference type="SMR" id="P0A232"/>
<dbReference type="STRING" id="220341.gene:17587454"/>
<dbReference type="KEGG" id="stt:t3340"/>
<dbReference type="KEGG" id="sty:STY3602"/>
<dbReference type="PATRIC" id="fig|220341.7.peg.3671"/>
<dbReference type="eggNOG" id="COG2829">
    <property type="taxonomic scope" value="Bacteria"/>
</dbReference>
<dbReference type="HOGENOM" id="CLU_045813_1_0_6"/>
<dbReference type="OMA" id="DVRWGGC"/>
<dbReference type="OrthoDB" id="188433at2"/>
<dbReference type="Proteomes" id="UP000000541">
    <property type="component" value="Chromosome"/>
</dbReference>
<dbReference type="Proteomes" id="UP000002670">
    <property type="component" value="Chromosome"/>
</dbReference>
<dbReference type="GO" id="GO:0009279">
    <property type="term" value="C:cell outer membrane"/>
    <property type="evidence" value="ECO:0007669"/>
    <property type="project" value="UniProtKB-SubCell"/>
</dbReference>
<dbReference type="GO" id="GO:0005509">
    <property type="term" value="F:calcium ion binding"/>
    <property type="evidence" value="ECO:0007669"/>
    <property type="project" value="TreeGrafter"/>
</dbReference>
<dbReference type="GO" id="GO:0008970">
    <property type="term" value="F:phospholipase A1 activity"/>
    <property type="evidence" value="ECO:0007669"/>
    <property type="project" value="UniProtKB-EC"/>
</dbReference>
<dbReference type="GO" id="GO:0004623">
    <property type="term" value="F:phospholipase A2 activity"/>
    <property type="evidence" value="ECO:0007669"/>
    <property type="project" value="UniProtKB-EC"/>
</dbReference>
<dbReference type="GO" id="GO:0016042">
    <property type="term" value="P:lipid catabolic process"/>
    <property type="evidence" value="ECO:0007669"/>
    <property type="project" value="UniProtKB-KW"/>
</dbReference>
<dbReference type="CDD" id="cd00541">
    <property type="entry name" value="OMPLA"/>
    <property type="match status" value="1"/>
</dbReference>
<dbReference type="FunFam" id="2.40.230.10:FF:000001">
    <property type="entry name" value="Phospholipase A(1)"/>
    <property type="match status" value="1"/>
</dbReference>
<dbReference type="Gene3D" id="2.40.230.10">
    <property type="entry name" value="Phospholipase A1"/>
    <property type="match status" value="1"/>
</dbReference>
<dbReference type="InterPro" id="IPR003187">
    <property type="entry name" value="PLipase_A1"/>
</dbReference>
<dbReference type="InterPro" id="IPR036541">
    <property type="entry name" value="PLipase_A1_sf"/>
</dbReference>
<dbReference type="NCBIfam" id="NF008031">
    <property type="entry name" value="PRK10763.1"/>
    <property type="match status" value="1"/>
</dbReference>
<dbReference type="PANTHER" id="PTHR40457">
    <property type="entry name" value="PHOSPHOLIPASE A1"/>
    <property type="match status" value="1"/>
</dbReference>
<dbReference type="PANTHER" id="PTHR40457:SF1">
    <property type="entry name" value="PHOSPHOLIPASE A1"/>
    <property type="match status" value="1"/>
</dbReference>
<dbReference type="Pfam" id="PF02253">
    <property type="entry name" value="PLA1"/>
    <property type="match status" value="1"/>
</dbReference>
<dbReference type="PRINTS" id="PR01486">
    <property type="entry name" value="PHPHLIPASEA1"/>
</dbReference>
<dbReference type="SUPFAM" id="SSF56931">
    <property type="entry name" value="Outer membrane phospholipase A (OMPLA)"/>
    <property type="match status" value="1"/>
</dbReference>
<accession>P0A232</accession>
<accession>P37442</accession>
<accession>Q9L6N9</accession>
<proteinExistence type="evidence at protein level"/>
<organism>
    <name type="scientific">Salmonella typhi</name>
    <dbReference type="NCBI Taxonomy" id="90370"/>
    <lineage>
        <taxon>Bacteria</taxon>
        <taxon>Pseudomonadati</taxon>
        <taxon>Pseudomonadota</taxon>
        <taxon>Gammaproteobacteria</taxon>
        <taxon>Enterobacterales</taxon>
        <taxon>Enterobacteriaceae</taxon>
        <taxon>Salmonella</taxon>
    </lineage>
</organism>
<sequence>MRAILRGLLPATLLPLAAYAQEATIKEVHDAPAVRGSIIANMLQEHDNPFTLYPYDTNYLIYTNTSDLNKEAISTYNWSENARKDEVKFQLSLAFPLWRGILGPNSVLGASYTQKSWWQLSNSKESSPFRETNYEPQLFLGFATDYRFAGWTLRDVEMGYNHDSNGRSDPTSRSWNRLYTRLMAENGNWLVEVKPWYVIGSTDDNPDITKYMGYYQLKIGYHLGEAVLSAKGQYNWNTGYGGAEVGLSYPVTKHVRLYTQVYSGYGESLIDYNFNQTRVGVGVMLNDIF</sequence>
<evidence type="ECO:0000250" key="1"/>
<evidence type="ECO:0000305" key="2"/>
<evidence type="ECO:0007829" key="3">
    <source>
        <dbReference type="PDB" id="7EZZ"/>
    </source>
</evidence>
<gene>
    <name type="primary">pldA</name>
    <name type="ordered locus">STY3602</name>
    <name type="ordered locus">t3340</name>
</gene>
<protein>
    <recommendedName>
        <fullName>Phospholipase A1</fullName>
        <ecNumber>3.1.1.32</ecNumber>
        <ecNumber>3.1.1.4</ecNumber>
    </recommendedName>
    <alternativeName>
        <fullName>Detergent-resistant phospholipase A</fullName>
        <shortName>DR-phospholipase A</shortName>
    </alternativeName>
    <alternativeName>
        <fullName>Outer membrane phospholipase A</fullName>
        <shortName>OM PLA</shortName>
    </alternativeName>
    <alternativeName>
        <fullName>Phosphatidylcholine 1-acylhydrolase</fullName>
    </alternativeName>
</protein>
<keyword id="KW-0002">3D-structure</keyword>
<keyword id="KW-0106">Calcium</keyword>
<keyword id="KW-0998">Cell outer membrane</keyword>
<keyword id="KW-0378">Hydrolase</keyword>
<keyword id="KW-0442">Lipid degradation</keyword>
<keyword id="KW-0443">Lipid metabolism</keyword>
<keyword id="KW-0472">Membrane</keyword>
<keyword id="KW-0479">Metal-binding</keyword>
<keyword id="KW-0732">Signal</keyword>
<keyword id="KW-0812">Transmembrane</keyword>
<keyword id="KW-1134">Transmembrane beta strand</keyword>
<feature type="signal peptide" evidence="1">
    <location>
        <begin position="1"/>
        <end position="20"/>
    </location>
</feature>
<feature type="chain" id="PRO_0000021988" description="Phospholipase A1">
    <location>
        <begin position="21"/>
        <end position="289"/>
    </location>
</feature>
<feature type="topological domain" description="Periplasmic" evidence="1">
    <location>
        <begin position="21"/>
        <end position="52"/>
    </location>
</feature>
<feature type="transmembrane region" description="Beta stranded" evidence="1">
    <location>
        <begin position="53"/>
        <end position="65"/>
    </location>
</feature>
<feature type="topological domain" description="Extracellular" evidence="1">
    <location>
        <begin position="66"/>
        <end position="84"/>
    </location>
</feature>
<feature type="transmembrane region" description="Beta stranded" evidence="1">
    <location>
        <begin position="85"/>
        <end position="99"/>
    </location>
</feature>
<feature type="topological domain" description="Periplasmic" evidence="1">
    <location>
        <begin position="100"/>
        <end position="105"/>
    </location>
</feature>
<feature type="transmembrane region" description="Beta stranded" evidence="1">
    <location>
        <begin position="106"/>
        <end position="118"/>
    </location>
</feature>
<feature type="topological domain" description="Extracellular" evidence="1">
    <location>
        <begin position="119"/>
        <end position="128"/>
    </location>
</feature>
<feature type="transmembrane region" description="Beta stranded" evidence="1">
    <location>
        <begin position="129"/>
        <end position="148"/>
    </location>
</feature>
<feature type="topological domain" description="Periplasmic" evidence="1">
    <location>
        <begin position="149"/>
        <end position="150"/>
    </location>
</feature>
<feature type="transmembrane region" description="Beta stranded" evidence="1">
    <location>
        <begin position="151"/>
        <end position="164"/>
    </location>
</feature>
<feature type="topological domain" description="Extracellular" evidence="1">
    <location>
        <begin position="165"/>
        <end position="173"/>
    </location>
</feature>
<feature type="transmembrane region" description="Beta stranded" evidence="1">
    <location>
        <begin position="174"/>
        <end position="186"/>
    </location>
</feature>
<feature type="topological domain" description="Periplasmic" evidence="1">
    <location>
        <begin position="187"/>
        <end position="188"/>
    </location>
</feature>
<feature type="transmembrane region" description="Beta stranded" evidence="1">
    <location>
        <begin position="189"/>
        <end position="198"/>
    </location>
</feature>
<feature type="topological domain" description="Extracellular" evidence="1">
    <location>
        <begin position="199"/>
        <end position="216"/>
    </location>
</feature>
<feature type="transmembrane region" description="Beta stranded" evidence="1">
    <location>
        <begin position="217"/>
        <end position="223"/>
    </location>
</feature>
<feature type="topological domain" description="Periplasmic" evidence="1">
    <location>
        <begin position="224"/>
        <end position="225"/>
    </location>
</feature>
<feature type="transmembrane region" description="Beta stranded" evidence="1">
    <location>
        <begin position="226"/>
        <end position="234"/>
    </location>
</feature>
<feature type="topological domain" description="Extracellular" evidence="1">
    <location>
        <begin position="235"/>
        <end position="241"/>
    </location>
</feature>
<feature type="transmembrane region" description="Beta stranded" evidence="1">
    <location>
        <begin position="242"/>
        <end position="250"/>
    </location>
</feature>
<feature type="topological domain" description="Periplasmic" evidence="1">
    <location>
        <begin position="251"/>
        <end position="255"/>
    </location>
</feature>
<feature type="transmembrane region" description="Beta stranded" evidence="1">
    <location>
        <begin position="256"/>
        <end position="265"/>
    </location>
</feature>
<feature type="topological domain" description="Extracellular" evidence="1">
    <location>
        <begin position="266"/>
        <end position="274"/>
    </location>
</feature>
<feature type="transmembrane region" description="Beta stranded" evidence="1">
    <location>
        <begin position="275"/>
        <end position="286"/>
    </location>
</feature>
<feature type="topological domain" description="Periplasmic" evidence="1">
    <location>
        <begin position="287"/>
        <end position="289"/>
    </location>
</feature>
<feature type="active site" description="Proton acceptor" evidence="1">
    <location>
        <position position="162"/>
    </location>
</feature>
<feature type="active site" description="Nucleophile" evidence="1">
    <location>
        <position position="164"/>
    </location>
</feature>
<feature type="binding site" description="in dimeric form" evidence="1">
    <location>
        <position position="126"/>
    </location>
    <ligand>
        <name>Ca(2+)</name>
        <dbReference type="ChEBI" id="CHEBI:29108"/>
        <label>1</label>
    </ligand>
</feature>
<feature type="binding site" description="in dimeric form" evidence="1">
    <location>
        <position position="167"/>
    </location>
    <ligand>
        <name>Ca(2+)</name>
        <dbReference type="ChEBI" id="CHEBI:29108"/>
        <label>2</label>
    </ligand>
</feature>
<feature type="binding site" description="in dimeric form" evidence="1">
    <location>
        <position position="172"/>
    </location>
    <ligand>
        <name>Ca(2+)</name>
        <dbReference type="ChEBI" id="CHEBI:29108"/>
        <label>2</label>
    </ligand>
</feature>
<feature type="binding site" description="in monomeric form" evidence="1">
    <location>
        <position position="204"/>
    </location>
    <ligand>
        <name>Ca(2+)</name>
        <dbReference type="ChEBI" id="CHEBI:29108"/>
        <label>3</label>
    </ligand>
</feature>
<feature type="helix" evidence="3">
    <location>
        <begin position="38"/>
        <end position="43"/>
    </location>
</feature>
<feature type="strand" evidence="3">
    <location>
        <begin position="52"/>
        <end position="56"/>
    </location>
</feature>
<feature type="strand" evidence="3">
    <location>
        <begin position="59"/>
        <end position="66"/>
    </location>
</feature>
<feature type="turn" evidence="3">
    <location>
        <begin position="70"/>
        <end position="75"/>
    </location>
</feature>
<feature type="helix" evidence="3">
    <location>
        <begin position="79"/>
        <end position="81"/>
    </location>
</feature>
<feature type="strand" evidence="3">
    <location>
        <begin position="84"/>
        <end position="99"/>
    </location>
</feature>
<feature type="turn" evidence="3">
    <location>
        <begin position="100"/>
        <end position="102"/>
    </location>
</feature>
<feature type="strand" evidence="3">
    <location>
        <begin position="106"/>
        <end position="118"/>
    </location>
</feature>
<feature type="helix" evidence="3">
    <location>
        <begin position="123"/>
        <end position="125"/>
    </location>
</feature>
<feature type="strand" evidence="3">
    <location>
        <begin position="129"/>
        <end position="148"/>
    </location>
</feature>
<feature type="strand" evidence="3">
    <location>
        <begin position="151"/>
        <end position="164"/>
    </location>
</feature>
<feature type="turn" evidence="3">
    <location>
        <begin position="169"/>
        <end position="171"/>
    </location>
</feature>
<feature type="strand" evidence="3">
    <location>
        <begin position="174"/>
        <end position="186"/>
    </location>
</feature>
<feature type="strand" evidence="3">
    <location>
        <begin position="189"/>
        <end position="200"/>
    </location>
</feature>
<feature type="helix" evidence="3">
    <location>
        <begin position="208"/>
        <end position="212"/>
    </location>
</feature>
<feature type="strand" evidence="3">
    <location>
        <begin position="214"/>
        <end position="223"/>
    </location>
</feature>
<feature type="strand" evidence="3">
    <location>
        <begin position="226"/>
        <end position="235"/>
    </location>
</feature>
<feature type="turn" evidence="3">
    <location>
        <begin position="236"/>
        <end position="239"/>
    </location>
</feature>
<feature type="strand" evidence="3">
    <location>
        <begin position="240"/>
        <end position="254"/>
    </location>
</feature>
<feature type="strand" evidence="3">
    <location>
        <begin position="256"/>
        <end position="265"/>
    </location>
</feature>
<feature type="helix" evidence="3">
    <location>
        <begin position="269"/>
        <end position="271"/>
    </location>
</feature>
<feature type="strand" evidence="3">
    <location>
        <begin position="275"/>
        <end position="285"/>
    </location>
</feature>
<reference key="1">
    <citation type="journal article" date="2001" name="Nature">
        <title>Complete genome sequence of a multiple drug resistant Salmonella enterica serovar Typhi CT18.</title>
        <authorList>
            <person name="Parkhill J."/>
            <person name="Dougan G."/>
            <person name="James K.D."/>
            <person name="Thomson N.R."/>
            <person name="Pickard D."/>
            <person name="Wain J."/>
            <person name="Churcher C.M."/>
            <person name="Mungall K.L."/>
            <person name="Bentley S.D."/>
            <person name="Holden M.T.G."/>
            <person name="Sebaihia M."/>
            <person name="Baker S."/>
            <person name="Basham D."/>
            <person name="Brooks K."/>
            <person name="Chillingworth T."/>
            <person name="Connerton P."/>
            <person name="Cronin A."/>
            <person name="Davis P."/>
            <person name="Davies R.M."/>
            <person name="Dowd L."/>
            <person name="White N."/>
            <person name="Farrar J."/>
            <person name="Feltwell T."/>
            <person name="Hamlin N."/>
            <person name="Haque A."/>
            <person name="Hien T.T."/>
            <person name="Holroyd S."/>
            <person name="Jagels K."/>
            <person name="Krogh A."/>
            <person name="Larsen T.S."/>
            <person name="Leather S."/>
            <person name="Moule S."/>
            <person name="O'Gaora P."/>
            <person name="Parry C."/>
            <person name="Quail M.A."/>
            <person name="Rutherford K.M."/>
            <person name="Simmonds M."/>
            <person name="Skelton J."/>
            <person name="Stevens K."/>
            <person name="Whitehead S."/>
            <person name="Barrell B.G."/>
        </authorList>
    </citation>
    <scope>NUCLEOTIDE SEQUENCE [LARGE SCALE GENOMIC DNA]</scope>
    <source>
        <strain>CT18</strain>
    </source>
</reference>
<reference key="2">
    <citation type="journal article" date="2003" name="J. Bacteriol.">
        <title>Comparative genomics of Salmonella enterica serovar Typhi strains Ty2 and CT18.</title>
        <authorList>
            <person name="Deng W."/>
            <person name="Liou S.-R."/>
            <person name="Plunkett G. III"/>
            <person name="Mayhew G.F."/>
            <person name="Rose D.J."/>
            <person name="Burland V."/>
            <person name="Kodoyianni V."/>
            <person name="Schwartz D.C."/>
            <person name="Blattner F.R."/>
        </authorList>
    </citation>
    <scope>NUCLEOTIDE SEQUENCE [LARGE SCALE GENOMIC DNA]</scope>
    <source>
        <strain>ATCC 700931 / Ty2</strain>
    </source>
</reference>
<comment type="function">
    <text evidence="1">Hydrolysis of phosphatidylcholine with phospholipase A2 (EC 3.1.1.4) and phospholipase A1 (EC 3.1.1.32) activities.</text>
</comment>
<comment type="catalytic activity">
    <reaction>
        <text>a 1,2-diacyl-sn-glycero-3-phosphocholine + H2O = a 2-acyl-sn-glycero-3-phosphocholine + a fatty acid + H(+)</text>
        <dbReference type="Rhea" id="RHEA:18689"/>
        <dbReference type="ChEBI" id="CHEBI:15377"/>
        <dbReference type="ChEBI" id="CHEBI:15378"/>
        <dbReference type="ChEBI" id="CHEBI:28868"/>
        <dbReference type="ChEBI" id="CHEBI:57643"/>
        <dbReference type="ChEBI" id="CHEBI:57875"/>
        <dbReference type="EC" id="3.1.1.32"/>
    </reaction>
</comment>
<comment type="catalytic activity">
    <reaction>
        <text>a 1,2-diacyl-sn-glycero-3-phosphocholine + H2O = a 1-acyl-sn-glycero-3-phosphocholine + a fatty acid + H(+)</text>
        <dbReference type="Rhea" id="RHEA:15801"/>
        <dbReference type="ChEBI" id="CHEBI:15377"/>
        <dbReference type="ChEBI" id="CHEBI:15378"/>
        <dbReference type="ChEBI" id="CHEBI:28868"/>
        <dbReference type="ChEBI" id="CHEBI:57643"/>
        <dbReference type="ChEBI" id="CHEBI:58168"/>
        <dbReference type="EC" id="3.1.1.4"/>
    </reaction>
</comment>
<comment type="cofactor">
    <cofactor evidence="1">
        <name>Ca(2+)</name>
        <dbReference type="ChEBI" id="CHEBI:29108"/>
    </cofactor>
    <text evidence="1">Binds 1 Ca(2+) ion per monomer. In the dimeric form the Ca(2+) is bound by different amino acids with binding of each Ca(2+) shared with ligands coming from each monomer. The Ca(2+) ion may have a role in catalysis.</text>
</comment>
<comment type="subunit">
    <text evidence="1">Homodimer; dimerization is reversible, and the dimeric form is the active one.</text>
</comment>
<comment type="subcellular location">
    <subcellularLocation>
        <location evidence="1">Cell outer membrane</location>
        <topology evidence="1">Multi-pass membrane protein</topology>
    </subcellularLocation>
    <text evidence="1">One of the very few enzymes located there.</text>
</comment>
<comment type="similarity">
    <text evidence="2">Belongs to the phospholipase A1 family.</text>
</comment>